<proteinExistence type="inferred from homology"/>
<reference key="1">
    <citation type="journal article" date="2001" name="Science">
        <title>Comparative genomics of Listeria species.</title>
        <authorList>
            <person name="Glaser P."/>
            <person name="Frangeul L."/>
            <person name="Buchrieser C."/>
            <person name="Rusniok C."/>
            <person name="Amend A."/>
            <person name="Baquero F."/>
            <person name="Berche P."/>
            <person name="Bloecker H."/>
            <person name="Brandt P."/>
            <person name="Chakraborty T."/>
            <person name="Charbit A."/>
            <person name="Chetouani F."/>
            <person name="Couve E."/>
            <person name="de Daruvar A."/>
            <person name="Dehoux P."/>
            <person name="Domann E."/>
            <person name="Dominguez-Bernal G."/>
            <person name="Duchaud E."/>
            <person name="Durant L."/>
            <person name="Dussurget O."/>
            <person name="Entian K.-D."/>
            <person name="Fsihi H."/>
            <person name="Garcia-del Portillo F."/>
            <person name="Garrido P."/>
            <person name="Gautier L."/>
            <person name="Goebel W."/>
            <person name="Gomez-Lopez N."/>
            <person name="Hain T."/>
            <person name="Hauf J."/>
            <person name="Jackson D."/>
            <person name="Jones L.-M."/>
            <person name="Kaerst U."/>
            <person name="Kreft J."/>
            <person name="Kuhn M."/>
            <person name="Kunst F."/>
            <person name="Kurapkat G."/>
            <person name="Madueno E."/>
            <person name="Maitournam A."/>
            <person name="Mata Vicente J."/>
            <person name="Ng E."/>
            <person name="Nedjari H."/>
            <person name="Nordsiek G."/>
            <person name="Novella S."/>
            <person name="de Pablos B."/>
            <person name="Perez-Diaz J.-C."/>
            <person name="Purcell R."/>
            <person name="Remmel B."/>
            <person name="Rose M."/>
            <person name="Schlueter T."/>
            <person name="Simoes N."/>
            <person name="Tierrez A."/>
            <person name="Vazquez-Boland J.-A."/>
            <person name="Voss H."/>
            <person name="Wehland J."/>
            <person name="Cossart P."/>
        </authorList>
    </citation>
    <scope>NUCLEOTIDE SEQUENCE [LARGE SCALE GENOMIC DNA]</scope>
    <source>
        <strain>ATCC BAA-680 / CLIP 11262</strain>
    </source>
</reference>
<gene>
    <name evidence="1" type="primary">ligA</name>
    <name type="ordered locus">lin1870</name>
</gene>
<dbReference type="EC" id="6.5.1.2" evidence="1"/>
<dbReference type="EMBL" id="AL596170">
    <property type="protein sequence ID" value="CAC97100.1"/>
    <property type="molecule type" value="Genomic_DNA"/>
</dbReference>
<dbReference type="PIR" id="AD1666">
    <property type="entry name" value="AD1666"/>
</dbReference>
<dbReference type="RefSeq" id="WP_010990996.1">
    <property type="nucleotide sequence ID" value="NC_003212.1"/>
</dbReference>
<dbReference type="SMR" id="Q92AQ0"/>
<dbReference type="STRING" id="272626.gene:17566225"/>
<dbReference type="KEGG" id="lin:lin1870"/>
<dbReference type="eggNOG" id="COG0272">
    <property type="taxonomic scope" value="Bacteria"/>
</dbReference>
<dbReference type="HOGENOM" id="CLU_007764_2_1_9"/>
<dbReference type="OrthoDB" id="9759736at2"/>
<dbReference type="Proteomes" id="UP000002513">
    <property type="component" value="Chromosome"/>
</dbReference>
<dbReference type="GO" id="GO:0005829">
    <property type="term" value="C:cytosol"/>
    <property type="evidence" value="ECO:0007669"/>
    <property type="project" value="TreeGrafter"/>
</dbReference>
<dbReference type="GO" id="GO:0003677">
    <property type="term" value="F:DNA binding"/>
    <property type="evidence" value="ECO:0007669"/>
    <property type="project" value="InterPro"/>
</dbReference>
<dbReference type="GO" id="GO:0003911">
    <property type="term" value="F:DNA ligase (NAD+) activity"/>
    <property type="evidence" value="ECO:0007669"/>
    <property type="project" value="UniProtKB-UniRule"/>
</dbReference>
<dbReference type="GO" id="GO:0046872">
    <property type="term" value="F:metal ion binding"/>
    <property type="evidence" value="ECO:0007669"/>
    <property type="project" value="UniProtKB-KW"/>
</dbReference>
<dbReference type="GO" id="GO:0006281">
    <property type="term" value="P:DNA repair"/>
    <property type="evidence" value="ECO:0007669"/>
    <property type="project" value="UniProtKB-KW"/>
</dbReference>
<dbReference type="GO" id="GO:0006260">
    <property type="term" value="P:DNA replication"/>
    <property type="evidence" value="ECO:0007669"/>
    <property type="project" value="UniProtKB-KW"/>
</dbReference>
<dbReference type="CDD" id="cd17748">
    <property type="entry name" value="BRCT_DNA_ligase_like"/>
    <property type="match status" value="1"/>
</dbReference>
<dbReference type="CDD" id="cd00114">
    <property type="entry name" value="LIGANc"/>
    <property type="match status" value="1"/>
</dbReference>
<dbReference type="FunFam" id="1.10.150.20:FF:000006">
    <property type="entry name" value="DNA ligase"/>
    <property type="match status" value="1"/>
</dbReference>
<dbReference type="FunFam" id="1.10.150.20:FF:000007">
    <property type="entry name" value="DNA ligase"/>
    <property type="match status" value="1"/>
</dbReference>
<dbReference type="FunFam" id="1.10.287.610:FF:000002">
    <property type="entry name" value="DNA ligase"/>
    <property type="match status" value="1"/>
</dbReference>
<dbReference type="FunFam" id="2.40.50.140:FF:000012">
    <property type="entry name" value="DNA ligase"/>
    <property type="match status" value="1"/>
</dbReference>
<dbReference type="FunFam" id="3.30.470.30:FF:000001">
    <property type="entry name" value="DNA ligase"/>
    <property type="match status" value="1"/>
</dbReference>
<dbReference type="FunFam" id="3.40.50.10190:FF:000026">
    <property type="entry name" value="DNA ligase"/>
    <property type="match status" value="1"/>
</dbReference>
<dbReference type="FunFam" id="6.20.10.30:FF:000002">
    <property type="entry name" value="DNA ligase"/>
    <property type="match status" value="1"/>
</dbReference>
<dbReference type="Gene3D" id="6.20.10.30">
    <property type="match status" value="1"/>
</dbReference>
<dbReference type="Gene3D" id="1.10.150.20">
    <property type="entry name" value="5' to 3' exonuclease, C-terminal subdomain"/>
    <property type="match status" value="2"/>
</dbReference>
<dbReference type="Gene3D" id="3.40.50.10190">
    <property type="entry name" value="BRCT domain"/>
    <property type="match status" value="1"/>
</dbReference>
<dbReference type="Gene3D" id="3.30.470.30">
    <property type="entry name" value="DNA ligase/mRNA capping enzyme"/>
    <property type="match status" value="1"/>
</dbReference>
<dbReference type="Gene3D" id="1.10.287.610">
    <property type="entry name" value="Helix hairpin bin"/>
    <property type="match status" value="1"/>
</dbReference>
<dbReference type="Gene3D" id="2.40.50.140">
    <property type="entry name" value="Nucleic acid-binding proteins"/>
    <property type="match status" value="1"/>
</dbReference>
<dbReference type="HAMAP" id="MF_01588">
    <property type="entry name" value="DNA_ligase_A"/>
    <property type="match status" value="1"/>
</dbReference>
<dbReference type="InterPro" id="IPR001357">
    <property type="entry name" value="BRCT_dom"/>
</dbReference>
<dbReference type="InterPro" id="IPR036420">
    <property type="entry name" value="BRCT_dom_sf"/>
</dbReference>
<dbReference type="InterPro" id="IPR041663">
    <property type="entry name" value="DisA/LigA_HHH"/>
</dbReference>
<dbReference type="InterPro" id="IPR001679">
    <property type="entry name" value="DNA_ligase"/>
</dbReference>
<dbReference type="InterPro" id="IPR033136">
    <property type="entry name" value="DNA_ligase_CS"/>
</dbReference>
<dbReference type="InterPro" id="IPR013839">
    <property type="entry name" value="DNAligase_adenylation"/>
</dbReference>
<dbReference type="InterPro" id="IPR013840">
    <property type="entry name" value="DNAligase_N"/>
</dbReference>
<dbReference type="InterPro" id="IPR003583">
    <property type="entry name" value="Hlx-hairpin-Hlx_DNA-bd_motif"/>
</dbReference>
<dbReference type="InterPro" id="IPR012340">
    <property type="entry name" value="NA-bd_OB-fold"/>
</dbReference>
<dbReference type="InterPro" id="IPR004150">
    <property type="entry name" value="NAD_DNA_ligase_OB"/>
</dbReference>
<dbReference type="InterPro" id="IPR010994">
    <property type="entry name" value="RuvA_2-like"/>
</dbReference>
<dbReference type="InterPro" id="IPR004149">
    <property type="entry name" value="Znf_DNAligase_C4"/>
</dbReference>
<dbReference type="NCBIfam" id="TIGR00575">
    <property type="entry name" value="dnlj"/>
    <property type="match status" value="1"/>
</dbReference>
<dbReference type="NCBIfam" id="NF005932">
    <property type="entry name" value="PRK07956.1"/>
    <property type="match status" value="1"/>
</dbReference>
<dbReference type="PANTHER" id="PTHR23389">
    <property type="entry name" value="CHROMOSOME TRANSMISSION FIDELITY FACTOR 18"/>
    <property type="match status" value="1"/>
</dbReference>
<dbReference type="PANTHER" id="PTHR23389:SF9">
    <property type="entry name" value="DNA LIGASE"/>
    <property type="match status" value="1"/>
</dbReference>
<dbReference type="Pfam" id="PF00533">
    <property type="entry name" value="BRCT"/>
    <property type="match status" value="1"/>
</dbReference>
<dbReference type="Pfam" id="PF01653">
    <property type="entry name" value="DNA_ligase_aden"/>
    <property type="match status" value="1"/>
</dbReference>
<dbReference type="Pfam" id="PF03120">
    <property type="entry name" value="DNA_ligase_OB"/>
    <property type="match status" value="1"/>
</dbReference>
<dbReference type="Pfam" id="PF03119">
    <property type="entry name" value="DNA_ligase_ZBD"/>
    <property type="match status" value="1"/>
</dbReference>
<dbReference type="Pfam" id="PF12826">
    <property type="entry name" value="HHH_2"/>
    <property type="match status" value="1"/>
</dbReference>
<dbReference type="PIRSF" id="PIRSF001604">
    <property type="entry name" value="LigA"/>
    <property type="match status" value="1"/>
</dbReference>
<dbReference type="SMART" id="SM00292">
    <property type="entry name" value="BRCT"/>
    <property type="match status" value="1"/>
</dbReference>
<dbReference type="SMART" id="SM00278">
    <property type="entry name" value="HhH1"/>
    <property type="match status" value="3"/>
</dbReference>
<dbReference type="SMART" id="SM00532">
    <property type="entry name" value="LIGANc"/>
    <property type="match status" value="1"/>
</dbReference>
<dbReference type="SUPFAM" id="SSF52113">
    <property type="entry name" value="BRCT domain"/>
    <property type="match status" value="1"/>
</dbReference>
<dbReference type="SUPFAM" id="SSF56091">
    <property type="entry name" value="DNA ligase/mRNA capping enzyme, catalytic domain"/>
    <property type="match status" value="1"/>
</dbReference>
<dbReference type="SUPFAM" id="SSF50249">
    <property type="entry name" value="Nucleic acid-binding proteins"/>
    <property type="match status" value="1"/>
</dbReference>
<dbReference type="SUPFAM" id="SSF47781">
    <property type="entry name" value="RuvA domain 2-like"/>
    <property type="match status" value="1"/>
</dbReference>
<dbReference type="PROSITE" id="PS50172">
    <property type="entry name" value="BRCT"/>
    <property type="match status" value="1"/>
</dbReference>
<dbReference type="PROSITE" id="PS01056">
    <property type="entry name" value="DNA_LIGASE_N2"/>
    <property type="match status" value="1"/>
</dbReference>
<organism>
    <name type="scientific">Listeria innocua serovar 6a (strain ATCC BAA-680 / CLIP 11262)</name>
    <dbReference type="NCBI Taxonomy" id="272626"/>
    <lineage>
        <taxon>Bacteria</taxon>
        <taxon>Bacillati</taxon>
        <taxon>Bacillota</taxon>
        <taxon>Bacilli</taxon>
        <taxon>Bacillales</taxon>
        <taxon>Listeriaceae</taxon>
        <taxon>Listeria</taxon>
    </lineage>
</organism>
<evidence type="ECO:0000255" key="1">
    <source>
        <dbReference type="HAMAP-Rule" id="MF_01588"/>
    </source>
</evidence>
<name>DNLJ_LISIN</name>
<feature type="chain" id="PRO_0000313295" description="DNA ligase">
    <location>
        <begin position="1"/>
        <end position="671"/>
    </location>
</feature>
<feature type="domain" description="BRCT" evidence="1">
    <location>
        <begin position="587"/>
        <end position="671"/>
    </location>
</feature>
<feature type="active site" description="N6-AMP-lysine intermediate" evidence="1">
    <location>
        <position position="112"/>
    </location>
</feature>
<feature type="binding site" evidence="1">
    <location>
        <begin position="31"/>
        <end position="35"/>
    </location>
    <ligand>
        <name>NAD(+)</name>
        <dbReference type="ChEBI" id="CHEBI:57540"/>
    </ligand>
</feature>
<feature type="binding site" evidence="1">
    <location>
        <begin position="80"/>
        <end position="81"/>
    </location>
    <ligand>
        <name>NAD(+)</name>
        <dbReference type="ChEBI" id="CHEBI:57540"/>
    </ligand>
</feature>
<feature type="binding site" evidence="1">
    <location>
        <position position="110"/>
    </location>
    <ligand>
        <name>NAD(+)</name>
        <dbReference type="ChEBI" id="CHEBI:57540"/>
    </ligand>
</feature>
<feature type="binding site" evidence="1">
    <location>
        <position position="133"/>
    </location>
    <ligand>
        <name>NAD(+)</name>
        <dbReference type="ChEBI" id="CHEBI:57540"/>
    </ligand>
</feature>
<feature type="binding site" evidence="1">
    <location>
        <position position="167"/>
    </location>
    <ligand>
        <name>NAD(+)</name>
        <dbReference type="ChEBI" id="CHEBI:57540"/>
    </ligand>
</feature>
<feature type="binding site" evidence="1">
    <location>
        <position position="283"/>
    </location>
    <ligand>
        <name>NAD(+)</name>
        <dbReference type="ChEBI" id="CHEBI:57540"/>
    </ligand>
</feature>
<feature type="binding site" evidence="1">
    <location>
        <position position="307"/>
    </location>
    <ligand>
        <name>NAD(+)</name>
        <dbReference type="ChEBI" id="CHEBI:57540"/>
    </ligand>
</feature>
<feature type="binding site" evidence="1">
    <location>
        <position position="401"/>
    </location>
    <ligand>
        <name>Zn(2+)</name>
        <dbReference type="ChEBI" id="CHEBI:29105"/>
    </ligand>
</feature>
<feature type="binding site" evidence="1">
    <location>
        <position position="404"/>
    </location>
    <ligand>
        <name>Zn(2+)</name>
        <dbReference type="ChEBI" id="CHEBI:29105"/>
    </ligand>
</feature>
<feature type="binding site" evidence="1">
    <location>
        <position position="419"/>
    </location>
    <ligand>
        <name>Zn(2+)</name>
        <dbReference type="ChEBI" id="CHEBI:29105"/>
    </ligand>
</feature>
<feature type="binding site" evidence="1">
    <location>
        <position position="424"/>
    </location>
    <ligand>
        <name>Zn(2+)</name>
        <dbReference type="ChEBI" id="CHEBI:29105"/>
    </ligand>
</feature>
<protein>
    <recommendedName>
        <fullName evidence="1">DNA ligase</fullName>
        <ecNumber evidence="1">6.5.1.2</ecNumber>
    </recommendedName>
    <alternativeName>
        <fullName evidence="1">Polydeoxyribonucleotide synthase [NAD(+)]</fullName>
    </alternativeName>
</protein>
<comment type="function">
    <text evidence="1">DNA ligase that catalyzes the formation of phosphodiester linkages between 5'-phosphoryl and 3'-hydroxyl groups in double-stranded DNA using NAD as a coenzyme and as the energy source for the reaction. It is essential for DNA replication and repair of damaged DNA.</text>
</comment>
<comment type="catalytic activity">
    <reaction evidence="1">
        <text>NAD(+) + (deoxyribonucleotide)n-3'-hydroxyl + 5'-phospho-(deoxyribonucleotide)m = (deoxyribonucleotide)n+m + AMP + beta-nicotinamide D-nucleotide.</text>
        <dbReference type="EC" id="6.5.1.2"/>
    </reaction>
</comment>
<comment type="cofactor">
    <cofactor evidence="1">
        <name>Mg(2+)</name>
        <dbReference type="ChEBI" id="CHEBI:18420"/>
    </cofactor>
    <cofactor evidence="1">
        <name>Mn(2+)</name>
        <dbReference type="ChEBI" id="CHEBI:29035"/>
    </cofactor>
</comment>
<comment type="similarity">
    <text evidence="1">Belongs to the NAD-dependent DNA ligase family. LigA subfamily.</text>
</comment>
<accession>Q92AQ0</accession>
<sequence>MADKKRYEELINILDQYSYDYYVIDNPTVEDAEYDQKMQELLKIEEAHPEWVTPESPSKRVGGEVLEGFKKVEHDTPMLSLANAFNRDDLADFDRRIRDKVGDDISYMCELKIDGLAVSLQYENGKYKQGATRGDGTVGEDITANLRTIRSIPMKLKKAYSIEVRGEAFMPKRSFQKLNEIREEEGQMLFANPRNAAAGSLRQLDTKIAASRNLDIFLYAVADFGEMGVETHSAGLDMLETLGLKVNKERRLCSNLEEVYAYIDEWTEKRAGLAYDIDGIVLKLNNLEQQRQMGTTVKSPRWSIAYKFPAEEVPTKLLDIELNVGRTGVITPTAVLEPVRVAGTTVSRASLHNEDLITEKDIRIGDTVLIKKAGDIIPEVIKSITEERTGSEKPFHMPKNCPTCDSELVRLEEEVALRCINPKCPAQIKEGLIHFVSRNAMNIDGLGEKVIIQLFSMHLIKDVADLFFLSKEKLLELERMGEKSVTNLLASIEASKQNSLEKLLFGLGIRHVGAKAAKSLAVHFETMDNLKIADKETLTSINDIGEKMADSIVTYFANEEVHDLLEELKRAGVNMTYTGPKLENMSEEELVFAGKTVVLTGKLEKLTRNDAKALIESLGGNVSGSVSKKTDVVVAGSDAGSKLAKAEELAIPIWSEEDLIEYLPDEGGLNE</sequence>
<keyword id="KW-0227">DNA damage</keyword>
<keyword id="KW-0234">DNA repair</keyword>
<keyword id="KW-0235">DNA replication</keyword>
<keyword id="KW-0436">Ligase</keyword>
<keyword id="KW-0460">Magnesium</keyword>
<keyword id="KW-0464">Manganese</keyword>
<keyword id="KW-0479">Metal-binding</keyword>
<keyword id="KW-0520">NAD</keyword>
<keyword id="KW-0862">Zinc</keyword>